<organism>
    <name type="scientific">Bacillus subtilis (strain 168)</name>
    <dbReference type="NCBI Taxonomy" id="224308"/>
    <lineage>
        <taxon>Bacteria</taxon>
        <taxon>Bacillati</taxon>
        <taxon>Bacillota</taxon>
        <taxon>Bacilli</taxon>
        <taxon>Bacillales</taxon>
        <taxon>Bacillaceae</taxon>
        <taxon>Bacillus</taxon>
    </lineage>
</organism>
<protein>
    <recommendedName>
        <fullName>Uncharacterized oxidoreductase YusZ</fullName>
        <ecNumber>1.-.-.-</ecNumber>
    </recommendedName>
    <alternativeName>
        <fullName>ORFA</fullName>
    </alternativeName>
</protein>
<feature type="chain" id="PRO_0000054849" description="Uncharacterized oxidoreductase YusZ">
    <location>
        <begin position="1"/>
        <end position="280"/>
    </location>
</feature>
<feature type="active site" description="Proton acceptor" evidence="2">
    <location>
        <position position="152"/>
    </location>
</feature>
<feature type="binding site" evidence="1">
    <location>
        <begin position="3"/>
        <end position="29"/>
    </location>
    <ligand>
        <name>NADP(+)</name>
        <dbReference type="ChEBI" id="CHEBI:58349"/>
    </ligand>
</feature>
<feature type="binding site" evidence="1">
    <location>
        <position position="139"/>
    </location>
    <ligand>
        <name>substrate</name>
    </ligand>
</feature>
<feature type="sequence conflict" description="In Ref. 3." evidence="3" ref="3">
    <original>HALEGFSESLRIELLPFGIET</original>
    <variation>MHWKVFLKACVSSCFRSVSKA</variation>
    <location>
        <begin position="157"/>
        <end position="177"/>
    </location>
</feature>
<feature type="sequence conflict" description="In Ref. 3; AAA68041/CAA80509." evidence="3" ref="3">
    <original>AD</original>
    <variation>RA</variation>
    <location>
        <begin position="202"/>
        <end position="203"/>
    </location>
</feature>
<feature type="sequence conflict" description="In Ref. 3; AAA68041/CAA80509." evidence="3" ref="3">
    <original>S</original>
    <variation>I</variation>
    <location>
        <position position="225"/>
    </location>
</feature>
<feature type="sequence conflict" description="In Ref. 3; AAA68041/CAA80509." evidence="3" ref="3">
    <original>QH</original>
    <variation>HD</variation>
    <location>
        <begin position="242"/>
        <end position="243"/>
    </location>
</feature>
<proteinExistence type="inferred from homology"/>
<reference key="1">
    <citation type="journal article" date="1997" name="Microbiology">
        <title>Sequencing of regions downstream of addA (98 degrees) and citG (289 degrees) in Bacillus subtilis.</title>
        <authorList>
            <person name="Medina N."/>
            <person name="Vannier F."/>
            <person name="Roche B."/>
            <person name="Autret S."/>
            <person name="Levine A."/>
            <person name="Seror S.J."/>
        </authorList>
    </citation>
    <scope>NUCLEOTIDE SEQUENCE [GENOMIC DNA]</scope>
</reference>
<reference key="2">
    <citation type="journal article" date="1997" name="Nature">
        <title>The complete genome sequence of the Gram-positive bacterium Bacillus subtilis.</title>
        <authorList>
            <person name="Kunst F."/>
            <person name="Ogasawara N."/>
            <person name="Moszer I."/>
            <person name="Albertini A.M."/>
            <person name="Alloni G."/>
            <person name="Azevedo V."/>
            <person name="Bertero M.G."/>
            <person name="Bessieres P."/>
            <person name="Bolotin A."/>
            <person name="Borchert S."/>
            <person name="Borriss R."/>
            <person name="Boursier L."/>
            <person name="Brans A."/>
            <person name="Braun M."/>
            <person name="Brignell S.C."/>
            <person name="Bron S."/>
            <person name="Brouillet S."/>
            <person name="Bruschi C.V."/>
            <person name="Caldwell B."/>
            <person name="Capuano V."/>
            <person name="Carter N.M."/>
            <person name="Choi S.-K."/>
            <person name="Codani J.-J."/>
            <person name="Connerton I.F."/>
            <person name="Cummings N.J."/>
            <person name="Daniel R.A."/>
            <person name="Denizot F."/>
            <person name="Devine K.M."/>
            <person name="Duesterhoeft A."/>
            <person name="Ehrlich S.D."/>
            <person name="Emmerson P.T."/>
            <person name="Entian K.-D."/>
            <person name="Errington J."/>
            <person name="Fabret C."/>
            <person name="Ferrari E."/>
            <person name="Foulger D."/>
            <person name="Fritz C."/>
            <person name="Fujita M."/>
            <person name="Fujita Y."/>
            <person name="Fuma S."/>
            <person name="Galizzi A."/>
            <person name="Galleron N."/>
            <person name="Ghim S.-Y."/>
            <person name="Glaser P."/>
            <person name="Goffeau A."/>
            <person name="Golightly E.J."/>
            <person name="Grandi G."/>
            <person name="Guiseppi G."/>
            <person name="Guy B.J."/>
            <person name="Haga K."/>
            <person name="Haiech J."/>
            <person name="Harwood C.R."/>
            <person name="Henaut A."/>
            <person name="Hilbert H."/>
            <person name="Holsappel S."/>
            <person name="Hosono S."/>
            <person name="Hullo M.-F."/>
            <person name="Itaya M."/>
            <person name="Jones L.-M."/>
            <person name="Joris B."/>
            <person name="Karamata D."/>
            <person name="Kasahara Y."/>
            <person name="Klaerr-Blanchard M."/>
            <person name="Klein C."/>
            <person name="Kobayashi Y."/>
            <person name="Koetter P."/>
            <person name="Koningstein G."/>
            <person name="Krogh S."/>
            <person name="Kumano M."/>
            <person name="Kurita K."/>
            <person name="Lapidus A."/>
            <person name="Lardinois S."/>
            <person name="Lauber J."/>
            <person name="Lazarevic V."/>
            <person name="Lee S.-M."/>
            <person name="Levine A."/>
            <person name="Liu H."/>
            <person name="Masuda S."/>
            <person name="Mauel C."/>
            <person name="Medigue C."/>
            <person name="Medina N."/>
            <person name="Mellado R.P."/>
            <person name="Mizuno M."/>
            <person name="Moestl D."/>
            <person name="Nakai S."/>
            <person name="Noback M."/>
            <person name="Noone D."/>
            <person name="O'Reilly M."/>
            <person name="Ogawa K."/>
            <person name="Ogiwara A."/>
            <person name="Oudega B."/>
            <person name="Park S.-H."/>
            <person name="Parro V."/>
            <person name="Pohl T.M."/>
            <person name="Portetelle D."/>
            <person name="Porwollik S."/>
            <person name="Prescott A.M."/>
            <person name="Presecan E."/>
            <person name="Pujic P."/>
            <person name="Purnelle B."/>
            <person name="Rapoport G."/>
            <person name="Rey M."/>
            <person name="Reynolds S."/>
            <person name="Rieger M."/>
            <person name="Rivolta C."/>
            <person name="Rocha E."/>
            <person name="Roche B."/>
            <person name="Rose M."/>
            <person name="Sadaie Y."/>
            <person name="Sato T."/>
            <person name="Scanlan E."/>
            <person name="Schleich S."/>
            <person name="Schroeter R."/>
            <person name="Scoffone F."/>
            <person name="Sekiguchi J."/>
            <person name="Sekowska A."/>
            <person name="Seror S.J."/>
            <person name="Serror P."/>
            <person name="Shin B.-S."/>
            <person name="Soldo B."/>
            <person name="Sorokin A."/>
            <person name="Tacconi E."/>
            <person name="Takagi T."/>
            <person name="Takahashi H."/>
            <person name="Takemaru K."/>
            <person name="Takeuchi M."/>
            <person name="Tamakoshi A."/>
            <person name="Tanaka T."/>
            <person name="Terpstra P."/>
            <person name="Tognoni A."/>
            <person name="Tosato V."/>
            <person name="Uchiyama S."/>
            <person name="Vandenbol M."/>
            <person name="Vannier F."/>
            <person name="Vassarotti A."/>
            <person name="Viari A."/>
            <person name="Wambutt R."/>
            <person name="Wedler E."/>
            <person name="Wedler H."/>
            <person name="Weitzenegger T."/>
            <person name="Winters P."/>
            <person name="Wipat A."/>
            <person name="Yamamoto H."/>
            <person name="Yamane K."/>
            <person name="Yasumoto K."/>
            <person name="Yata K."/>
            <person name="Yoshida K."/>
            <person name="Yoshikawa H.-F."/>
            <person name="Zumstein E."/>
            <person name="Yoshikawa H."/>
            <person name="Danchin A."/>
        </authorList>
    </citation>
    <scope>NUCLEOTIDE SEQUENCE [LARGE SCALE GENOMIC DNA]</scope>
    <source>
        <strain>168</strain>
    </source>
</reference>
<reference key="3">
    <citation type="journal article" date="1993" name="J. Bacteriol.">
        <title>Metalloregulation in Bacillus subtilis: isolation and characterization of two genes differentially repressed by metal ions.</title>
        <authorList>
            <person name="Chen L."/>
            <person name="James L.P."/>
            <person name="Helmann J.D."/>
        </authorList>
    </citation>
    <scope>NUCLEOTIDE SEQUENCE [GENOMIC DNA] OF 157-280</scope>
</reference>
<gene>
    <name type="primary">yusZ</name>
    <name type="synonym">yvxA</name>
    <name type="ordered locus">BSU32980</name>
</gene>
<sequence>MNKKIAIVTGASSGFGLLAAVKLARSFFVIATSRQPEKAEQLRELAAAHNVSDSIHITALDVTDEQSIVSFGKAVSAYAPIDLLVNNAGTAYGGFIEDVPMEHFRQQFETNVFGVIHVTKTVLPYIRKHGGAKIINVSSISGLTGFPALSPYVSSKHALEGFSESLRIELLPFGIETALIEPGSYKTSIWSTSLSNFMSVPADDSAYHQYYKKILSYVQKNGEESGDPQEVADLIYQLATKQHIKNLRYPIGKGIKLTLLFRSLFPWSAWESILKKKLFS</sequence>
<dbReference type="EC" id="1.-.-.-"/>
<dbReference type="EMBL" id="Z93941">
    <property type="protein sequence ID" value="CAB07971.1"/>
    <property type="molecule type" value="Genomic_DNA"/>
</dbReference>
<dbReference type="EMBL" id="L19547">
    <property type="protein sequence ID" value="AAA68041.1"/>
    <property type="molecule type" value="Genomic_DNA"/>
</dbReference>
<dbReference type="EMBL" id="AL009126">
    <property type="protein sequence ID" value="CAB15287.1"/>
    <property type="molecule type" value="Genomic_DNA"/>
</dbReference>
<dbReference type="EMBL" id="Z22928">
    <property type="protein sequence ID" value="CAA80509.1"/>
    <property type="molecule type" value="Genomic_DNA"/>
</dbReference>
<dbReference type="PIR" id="C70023">
    <property type="entry name" value="C70023"/>
</dbReference>
<dbReference type="RefSeq" id="NP_391177.1">
    <property type="nucleotide sequence ID" value="NC_000964.3"/>
</dbReference>
<dbReference type="RefSeq" id="WP_003228540.1">
    <property type="nucleotide sequence ID" value="NZ_OZ025638.1"/>
</dbReference>
<dbReference type="SMR" id="P37959"/>
<dbReference type="FunCoup" id="P37959">
    <property type="interactions" value="259"/>
</dbReference>
<dbReference type="STRING" id="224308.BSU32980"/>
<dbReference type="PaxDb" id="224308-BSU32980"/>
<dbReference type="EnsemblBacteria" id="CAB15287">
    <property type="protein sequence ID" value="CAB15287"/>
    <property type="gene ID" value="BSU_32980"/>
</dbReference>
<dbReference type="GeneID" id="938596"/>
<dbReference type="KEGG" id="bsu:BSU32980"/>
<dbReference type="PATRIC" id="fig|224308.179.peg.3574"/>
<dbReference type="eggNOG" id="COG1028">
    <property type="taxonomic scope" value="Bacteria"/>
</dbReference>
<dbReference type="InParanoid" id="P37959"/>
<dbReference type="OrthoDB" id="9775296at2"/>
<dbReference type="PhylomeDB" id="P37959"/>
<dbReference type="BioCyc" id="BSUB:BSU32980-MONOMER"/>
<dbReference type="Proteomes" id="UP000001570">
    <property type="component" value="Chromosome"/>
</dbReference>
<dbReference type="GO" id="GO:0016491">
    <property type="term" value="F:oxidoreductase activity"/>
    <property type="evidence" value="ECO:0007669"/>
    <property type="project" value="UniProtKB-KW"/>
</dbReference>
<dbReference type="CDD" id="cd05374">
    <property type="entry name" value="17beta-HSD-like_SDR_c"/>
    <property type="match status" value="1"/>
</dbReference>
<dbReference type="Gene3D" id="3.40.50.720">
    <property type="entry name" value="NAD(P)-binding Rossmann-like Domain"/>
    <property type="match status" value="1"/>
</dbReference>
<dbReference type="InterPro" id="IPR036291">
    <property type="entry name" value="NAD(P)-bd_dom_sf"/>
</dbReference>
<dbReference type="InterPro" id="IPR020904">
    <property type="entry name" value="Sc_DH/Rdtase_CS"/>
</dbReference>
<dbReference type="InterPro" id="IPR002347">
    <property type="entry name" value="SDR_fam"/>
</dbReference>
<dbReference type="InterPro" id="IPR051911">
    <property type="entry name" value="SDR_oxidoreductase"/>
</dbReference>
<dbReference type="NCBIfam" id="NF005372">
    <property type="entry name" value="PRK06914.1"/>
    <property type="match status" value="1"/>
</dbReference>
<dbReference type="PANTHER" id="PTHR43976">
    <property type="entry name" value="SHORT CHAIN DEHYDROGENASE"/>
    <property type="match status" value="1"/>
</dbReference>
<dbReference type="PANTHER" id="PTHR43976:SF16">
    <property type="entry name" value="SHORT-CHAIN DEHYDROGENASE_REDUCTASE FAMILY PROTEIN"/>
    <property type="match status" value="1"/>
</dbReference>
<dbReference type="Pfam" id="PF00106">
    <property type="entry name" value="adh_short"/>
    <property type="match status" value="1"/>
</dbReference>
<dbReference type="PRINTS" id="PR00081">
    <property type="entry name" value="GDHRDH"/>
</dbReference>
<dbReference type="PRINTS" id="PR00080">
    <property type="entry name" value="SDRFAMILY"/>
</dbReference>
<dbReference type="SUPFAM" id="SSF51735">
    <property type="entry name" value="NAD(P)-binding Rossmann-fold domains"/>
    <property type="match status" value="1"/>
</dbReference>
<dbReference type="PROSITE" id="PS00061">
    <property type="entry name" value="ADH_SHORT"/>
    <property type="match status" value="1"/>
</dbReference>
<evidence type="ECO:0000250" key="1"/>
<evidence type="ECO:0000255" key="2">
    <source>
        <dbReference type="PROSITE-ProRule" id="PRU10001"/>
    </source>
</evidence>
<evidence type="ECO:0000305" key="3"/>
<name>YUSZ_BACSU</name>
<accession>P37959</accession>
<accession>O34907</accession>
<comment type="similarity">
    <text evidence="3">Belongs to the short-chain dehydrogenases/reductases (SDR) family.</text>
</comment>
<keyword id="KW-0560">Oxidoreductase</keyword>
<keyword id="KW-1185">Reference proteome</keyword>